<organism>
    <name type="scientific">Arthrospira platensis</name>
    <name type="common">Spirulina platensis</name>
    <dbReference type="NCBI Taxonomy" id="118562"/>
    <lineage>
        <taxon>Bacteria</taxon>
        <taxon>Bacillati</taxon>
        <taxon>Cyanobacteriota</taxon>
        <taxon>Cyanophyceae</taxon>
        <taxon>Oscillatoriophycideae</taxon>
        <taxon>Oscillatoriales</taxon>
        <taxon>Microcoleaceae</taxon>
        <taxon>Arthrospira</taxon>
    </lineage>
</organism>
<comment type="function">
    <text>Light-harvesting photosynthetic bile pigment-protein from the phycobiliprotein complex. Allophycocyanin has a maximum absorption at approximately 650 nanometers.</text>
</comment>
<comment type="subunit">
    <text>Heterodimer of an alpha and a beta chain.</text>
</comment>
<comment type="subcellular location">
    <subcellularLocation>
        <location>Cellular thylakoid membrane</location>
        <topology>Peripheral membrane protein</topology>
        <orientation>Cytoplasmic side</orientation>
    </subcellularLocation>
    <text>Forms the core of the phycobilisome.</text>
</comment>
<comment type="PTM">
    <text>Contains one covalently linked phycocyanobilin chromophore.</text>
</comment>
<comment type="similarity">
    <text evidence="2">Belongs to the phycobiliprotein family.</text>
</comment>
<sequence length="161" mass="17415">MQDAITSVINSSDVQGKYLDRSAIQKLKAYFATGELRVRAATTISANAANIVKEAVAKSLLYSDITRPGGNMYTTRRYAACIRDLDYYLRYATYAMLAGDPSILDERVLNGLKETYNSLGVPIGATVQAIQAMKEVTAGLVGADAGKEMGIYFDYICSGLS</sequence>
<gene>
    <name type="primary">apcB</name>
</gene>
<evidence type="ECO:0000269" key="1">
    <source>
    </source>
</evidence>
<evidence type="ECO:0000305" key="2"/>
<evidence type="ECO:0007829" key="3">
    <source>
        <dbReference type="PDB" id="1ALL"/>
    </source>
</evidence>
<feature type="chain" id="PRO_0000199102" description="Allophycocyanin beta chain">
    <location>
        <begin position="1"/>
        <end position="161"/>
    </location>
</feature>
<feature type="binding site" description="covalent">
    <location>
        <position position="81"/>
    </location>
    <ligand>
        <name>(2R,3E)-phycocyanobilin</name>
        <dbReference type="ChEBI" id="CHEBI:85275"/>
    </ligand>
</feature>
<feature type="modified residue" description="N4-methylasparagine" evidence="1">
    <location>
        <position position="71"/>
    </location>
</feature>
<feature type="sequence conflict" description="In Ref. 2; BAA19986." evidence="2" ref="2">
    <original>R</original>
    <variation>A</variation>
    <location>
        <position position="21"/>
    </location>
</feature>
<feature type="helix" evidence="3">
    <location>
        <begin position="4"/>
        <end position="13"/>
    </location>
</feature>
<feature type="turn" evidence="3">
    <location>
        <begin position="14"/>
        <end position="16"/>
    </location>
</feature>
<feature type="helix" evidence="3">
    <location>
        <begin position="21"/>
        <end position="59"/>
    </location>
</feature>
<feature type="turn" evidence="3">
    <location>
        <begin position="60"/>
        <end position="62"/>
    </location>
</feature>
<feature type="turn" evidence="3">
    <location>
        <begin position="64"/>
        <end position="66"/>
    </location>
</feature>
<feature type="helix" evidence="3">
    <location>
        <begin position="75"/>
        <end position="98"/>
    </location>
</feature>
<feature type="helix" evidence="3">
    <location>
        <begin position="102"/>
        <end position="107"/>
    </location>
</feature>
<feature type="turn" evidence="3">
    <location>
        <begin position="108"/>
        <end position="111"/>
    </location>
</feature>
<feature type="helix" evidence="3">
    <location>
        <begin position="112"/>
        <end position="119"/>
    </location>
</feature>
<feature type="helix" evidence="3">
    <location>
        <begin position="123"/>
        <end position="159"/>
    </location>
</feature>
<name>APCB_ARTPT</name>
<reference key="1">
    <citation type="submission" date="1996-02" db="EMBL/GenBank/DDBJ databases">
        <title>Organization and nucleotide sequence of the a, b and c subunits of allophycocyanin genes from Spirulina platensis.</title>
        <authorList>
            <person name="Meesapyodsuk D."/>
            <person name="Chetkul W."/>
            <person name="Nomsasawai P."/>
            <person name="Anjard C."/>
            <person name="Tanticharoen M."/>
            <person name="Chevadhanarak S."/>
        </authorList>
    </citation>
    <scope>NUCLEOTIDE SEQUENCE [GENOMIC DNA]</scope>
    <source>
        <strain>Italy</strain>
    </source>
</reference>
<reference key="2">
    <citation type="submission" date="1996-06" db="EMBL/GenBank/DDBJ databases">
        <title>Cloning and sequencing of the allophycocyanin genes from cyanobacterium Spirulina platensis.</title>
        <authorList>
            <person name="Qin S."/>
            <person name="Kawata Y."/>
            <person name="Yano S."/>
            <person name="Tseng C."/>
            <person name="Kojima H."/>
        </authorList>
    </citation>
    <scope>NUCLEOTIDE SEQUENCE [GENOMIC DNA]</scope>
    <source>
        <strain>F3</strain>
    </source>
</reference>
<reference key="3">
    <citation type="journal article" date="1995" name="J. Mol. Biol.">
        <title>Isolation, crystallization, crystal structure analysis and refinement of allophycocyanin from the cyanobacterium Spirulina platensis at 2.3 A resolution.</title>
        <authorList>
            <person name="Brejc K."/>
            <person name="Ficner R."/>
            <person name="Huber R."/>
            <person name="Steinbacher S."/>
        </authorList>
    </citation>
    <scope>X-RAY CRYSTALLOGRAPHY (2.3 ANGSTROMS)</scope>
    <scope>METHYLATION AT ASN-71</scope>
</reference>
<dbReference type="EMBL" id="X95898">
    <property type="protein sequence ID" value="CAA65142.1"/>
    <property type="molecule type" value="Genomic_DNA"/>
</dbReference>
<dbReference type="EMBL" id="D86179">
    <property type="protein sequence ID" value="BAA19986.1"/>
    <property type="molecule type" value="Genomic_DNA"/>
</dbReference>
<dbReference type="PIR" id="S55558">
    <property type="entry name" value="S55558"/>
</dbReference>
<dbReference type="PDB" id="1ALL">
    <property type="method" value="X-ray"/>
    <property type="resolution" value="2.30 A"/>
    <property type="chains" value="B=1-161"/>
</dbReference>
<dbReference type="PDBsum" id="1ALL"/>
<dbReference type="SMR" id="P72505"/>
<dbReference type="MINT" id="P72505"/>
<dbReference type="iPTMnet" id="P72505"/>
<dbReference type="EvolutionaryTrace" id="P72505"/>
<dbReference type="GO" id="GO:0030089">
    <property type="term" value="C:phycobilisome"/>
    <property type="evidence" value="ECO:0007669"/>
    <property type="project" value="UniProtKB-KW"/>
</dbReference>
<dbReference type="GO" id="GO:0031676">
    <property type="term" value="C:plasma membrane-derived thylakoid membrane"/>
    <property type="evidence" value="ECO:0007669"/>
    <property type="project" value="UniProtKB-SubCell"/>
</dbReference>
<dbReference type="GO" id="GO:0015979">
    <property type="term" value="P:photosynthesis"/>
    <property type="evidence" value="ECO:0007669"/>
    <property type="project" value="UniProtKB-KW"/>
</dbReference>
<dbReference type="CDD" id="cd12126">
    <property type="entry name" value="APC_beta"/>
    <property type="match status" value="1"/>
</dbReference>
<dbReference type="Gene3D" id="1.10.490.20">
    <property type="entry name" value="Phycocyanins"/>
    <property type="match status" value="1"/>
</dbReference>
<dbReference type="InterPro" id="IPR006245">
    <property type="entry name" value="Allophycocyanin_b"/>
</dbReference>
<dbReference type="InterPro" id="IPR009050">
    <property type="entry name" value="Globin-like_sf"/>
</dbReference>
<dbReference type="InterPro" id="IPR012128">
    <property type="entry name" value="Phycobilisome_asu/bsu"/>
</dbReference>
<dbReference type="InterPro" id="IPR038719">
    <property type="entry name" value="Phycobilisome_asu/bsu_sf"/>
</dbReference>
<dbReference type="NCBIfam" id="TIGR01337">
    <property type="entry name" value="apcB"/>
    <property type="match status" value="1"/>
</dbReference>
<dbReference type="PANTHER" id="PTHR34011:SF3">
    <property type="entry name" value="ALLOPHYCOCYANIN BETA CHAIN"/>
    <property type="match status" value="1"/>
</dbReference>
<dbReference type="PANTHER" id="PTHR34011">
    <property type="entry name" value="PHYCOBILISOME 32.1 KDA LINKER POLYPEPTIDE, PHYCOCYANIN-ASSOCIATED, ROD 2-RELATED"/>
    <property type="match status" value="1"/>
</dbReference>
<dbReference type="Pfam" id="PF00502">
    <property type="entry name" value="Phycobilisome"/>
    <property type="match status" value="1"/>
</dbReference>
<dbReference type="PIRSF" id="PIRSF000081">
    <property type="entry name" value="Phycocyanin"/>
    <property type="match status" value="1"/>
</dbReference>
<dbReference type="SUPFAM" id="SSF46458">
    <property type="entry name" value="Globin-like"/>
    <property type="match status" value="1"/>
</dbReference>
<protein>
    <recommendedName>
        <fullName>Allophycocyanin beta chain</fullName>
    </recommendedName>
</protein>
<keyword id="KW-0002">3D-structure</keyword>
<keyword id="KW-0042">Antenna complex</keyword>
<keyword id="KW-0089">Bile pigment</keyword>
<keyword id="KW-0157">Chromophore</keyword>
<keyword id="KW-0249">Electron transport</keyword>
<keyword id="KW-0472">Membrane</keyword>
<keyword id="KW-0488">Methylation</keyword>
<keyword id="KW-0602">Photosynthesis</keyword>
<keyword id="KW-0605">Phycobilisome</keyword>
<keyword id="KW-0793">Thylakoid</keyword>
<keyword id="KW-0813">Transport</keyword>
<accession>P72505</accession>
<accession>O06675</accession>
<proteinExistence type="evidence at protein level"/>